<sequence length="178" mass="20440">MGDPRRLGKKYDTPNHPWIGERIQSEREISQKYGLVNKKELWKMETQLRNYRRQARKLISDTTTQGGKEAVQLFNVLKRYAILVEQEPTLDHVLSLNIESILERRLQTMVYKKGLAKTAKQARQFIVHGHIAVNGKRVTSPSYLVSVAENDAIEYVPNSPMASENHPERTAAVSEENQ</sequence>
<accession>A6VGQ7</accession>
<gene>
    <name evidence="1" type="primary">rps4</name>
    <name type="ordered locus">MmarC7_0565</name>
</gene>
<protein>
    <recommendedName>
        <fullName evidence="1">Small ribosomal subunit protein uS4</fullName>
    </recommendedName>
    <alternativeName>
        <fullName evidence="3">30S ribosomal protein S4</fullName>
    </alternativeName>
</protein>
<name>RS4_METM7</name>
<keyword id="KW-0687">Ribonucleoprotein</keyword>
<keyword id="KW-0689">Ribosomal protein</keyword>
<keyword id="KW-0694">RNA-binding</keyword>
<keyword id="KW-0699">rRNA-binding</keyword>
<comment type="function">
    <text evidence="1">One of the primary rRNA binding proteins, it binds directly to 16S rRNA where it nucleates assembly of the body of the 30S subunit.</text>
</comment>
<comment type="function">
    <text evidence="1">With S5 and S12 plays an important role in translational accuracy.</text>
</comment>
<comment type="subunit">
    <text evidence="1">Part of the 30S ribosomal subunit. Contacts protein S5. The interaction surface between S4 and S5 is involved in control of translational fidelity.</text>
</comment>
<comment type="similarity">
    <text evidence="1">Belongs to the universal ribosomal protein uS4 family.</text>
</comment>
<dbReference type="EMBL" id="CP000745">
    <property type="protein sequence ID" value="ABR65633.1"/>
    <property type="molecule type" value="Genomic_DNA"/>
</dbReference>
<dbReference type="SMR" id="A6VGQ7"/>
<dbReference type="STRING" id="426368.MmarC7_0565"/>
<dbReference type="KEGG" id="mmz:MmarC7_0565"/>
<dbReference type="eggNOG" id="arCOG04239">
    <property type="taxonomic scope" value="Archaea"/>
</dbReference>
<dbReference type="HOGENOM" id="CLU_089738_1_1_2"/>
<dbReference type="OrthoDB" id="10429at2157"/>
<dbReference type="GO" id="GO:0015935">
    <property type="term" value="C:small ribosomal subunit"/>
    <property type="evidence" value="ECO:0007669"/>
    <property type="project" value="InterPro"/>
</dbReference>
<dbReference type="GO" id="GO:0019843">
    <property type="term" value="F:rRNA binding"/>
    <property type="evidence" value="ECO:0007669"/>
    <property type="project" value="UniProtKB-UniRule"/>
</dbReference>
<dbReference type="GO" id="GO:0003735">
    <property type="term" value="F:structural constituent of ribosome"/>
    <property type="evidence" value="ECO:0007669"/>
    <property type="project" value="InterPro"/>
</dbReference>
<dbReference type="GO" id="GO:0042274">
    <property type="term" value="P:ribosomal small subunit biogenesis"/>
    <property type="evidence" value="ECO:0007669"/>
    <property type="project" value="TreeGrafter"/>
</dbReference>
<dbReference type="GO" id="GO:0006412">
    <property type="term" value="P:translation"/>
    <property type="evidence" value="ECO:0007669"/>
    <property type="project" value="UniProtKB-UniRule"/>
</dbReference>
<dbReference type="CDD" id="cd00165">
    <property type="entry name" value="S4"/>
    <property type="match status" value="1"/>
</dbReference>
<dbReference type="FunFam" id="3.10.290.10:FF:000026">
    <property type="entry name" value="30S ribosomal protein S4"/>
    <property type="match status" value="1"/>
</dbReference>
<dbReference type="Gene3D" id="3.10.290.10">
    <property type="entry name" value="RNA-binding S4 domain"/>
    <property type="match status" value="1"/>
</dbReference>
<dbReference type="HAMAP" id="MF_01306_A">
    <property type="entry name" value="Ribosomal_uS4_A"/>
    <property type="match status" value="1"/>
</dbReference>
<dbReference type="InterPro" id="IPR022801">
    <property type="entry name" value="Ribosomal_uS4"/>
</dbReference>
<dbReference type="InterPro" id="IPR022802">
    <property type="entry name" value="Ribosomal_uS4_arc"/>
</dbReference>
<dbReference type="InterPro" id="IPR018079">
    <property type="entry name" value="Ribosomal_uS4_CS"/>
</dbReference>
<dbReference type="InterPro" id="IPR005710">
    <property type="entry name" value="Ribosomal_uS4_euk/arc"/>
</dbReference>
<dbReference type="InterPro" id="IPR001912">
    <property type="entry name" value="Ribosomal_uS4_N"/>
</dbReference>
<dbReference type="InterPro" id="IPR002942">
    <property type="entry name" value="S4_RNA-bd"/>
</dbReference>
<dbReference type="InterPro" id="IPR036986">
    <property type="entry name" value="S4_RNA-bd_sf"/>
</dbReference>
<dbReference type="NCBIfam" id="NF003139">
    <property type="entry name" value="PRK04051.1"/>
    <property type="match status" value="1"/>
</dbReference>
<dbReference type="NCBIfam" id="TIGR01018">
    <property type="entry name" value="uS4_arch"/>
    <property type="match status" value="1"/>
</dbReference>
<dbReference type="PANTHER" id="PTHR11831">
    <property type="entry name" value="30S 40S RIBOSOMAL PROTEIN"/>
    <property type="match status" value="1"/>
</dbReference>
<dbReference type="PANTHER" id="PTHR11831:SF5">
    <property type="entry name" value="40S RIBOSOMAL PROTEIN S9"/>
    <property type="match status" value="1"/>
</dbReference>
<dbReference type="Pfam" id="PF01479">
    <property type="entry name" value="S4"/>
    <property type="match status" value="1"/>
</dbReference>
<dbReference type="SMART" id="SM01390">
    <property type="entry name" value="Ribosomal_S4"/>
    <property type="match status" value="1"/>
</dbReference>
<dbReference type="SMART" id="SM00363">
    <property type="entry name" value="S4"/>
    <property type="match status" value="1"/>
</dbReference>
<dbReference type="SUPFAM" id="SSF55174">
    <property type="entry name" value="Alpha-L RNA-binding motif"/>
    <property type="match status" value="1"/>
</dbReference>
<dbReference type="PROSITE" id="PS00632">
    <property type="entry name" value="RIBOSOMAL_S4"/>
    <property type="match status" value="1"/>
</dbReference>
<dbReference type="PROSITE" id="PS50889">
    <property type="entry name" value="S4"/>
    <property type="match status" value="1"/>
</dbReference>
<evidence type="ECO:0000255" key="1">
    <source>
        <dbReference type="HAMAP-Rule" id="MF_01306"/>
    </source>
</evidence>
<evidence type="ECO:0000256" key="2">
    <source>
        <dbReference type="SAM" id="MobiDB-lite"/>
    </source>
</evidence>
<evidence type="ECO:0000305" key="3"/>
<proteinExistence type="inferred from homology"/>
<organism>
    <name type="scientific">Methanococcus maripaludis (strain C7 / ATCC BAA-1331)</name>
    <dbReference type="NCBI Taxonomy" id="426368"/>
    <lineage>
        <taxon>Archaea</taxon>
        <taxon>Methanobacteriati</taxon>
        <taxon>Methanobacteriota</taxon>
        <taxon>Methanomada group</taxon>
        <taxon>Methanococci</taxon>
        <taxon>Methanococcales</taxon>
        <taxon>Methanococcaceae</taxon>
        <taxon>Methanococcus</taxon>
    </lineage>
</organism>
<feature type="chain" id="PRO_0000322359" description="Small ribosomal subunit protein uS4">
    <location>
        <begin position="1"/>
        <end position="178"/>
    </location>
</feature>
<feature type="domain" description="S4 RNA-binding" evidence="1">
    <location>
        <begin position="104"/>
        <end position="166"/>
    </location>
</feature>
<feature type="region of interest" description="Disordered" evidence="2">
    <location>
        <begin position="157"/>
        <end position="178"/>
    </location>
</feature>
<reference key="1">
    <citation type="submission" date="2007-06" db="EMBL/GenBank/DDBJ databases">
        <title>Complete sequence of Methanococcus maripaludis C7.</title>
        <authorList>
            <consortium name="US DOE Joint Genome Institute"/>
            <person name="Copeland A."/>
            <person name="Lucas S."/>
            <person name="Lapidus A."/>
            <person name="Barry K."/>
            <person name="Glavina del Rio T."/>
            <person name="Dalin E."/>
            <person name="Tice H."/>
            <person name="Pitluck S."/>
            <person name="Clum A."/>
            <person name="Schmutz J."/>
            <person name="Larimer F."/>
            <person name="Land M."/>
            <person name="Hauser L."/>
            <person name="Kyrpides N."/>
            <person name="Anderson I."/>
            <person name="Sieprawska-Lupa M."/>
            <person name="Whitman W.B."/>
            <person name="Richardson P."/>
        </authorList>
    </citation>
    <scope>NUCLEOTIDE SEQUENCE [LARGE SCALE GENOMIC DNA]</scope>
    <source>
        <strain>C7 / ATCC BAA-1331</strain>
    </source>
</reference>